<keyword id="KW-0249">Electron transport</keyword>
<keyword id="KW-0472">Membrane</keyword>
<keyword id="KW-0602">Photosynthesis</keyword>
<keyword id="KW-0934">Plastid</keyword>
<keyword id="KW-0812">Transmembrane</keyword>
<keyword id="KW-1133">Transmembrane helix</keyword>
<keyword id="KW-0813">Transport</keyword>
<dbReference type="EMBL" id="EU189133">
    <property type="protein sequence ID" value="ABW20555.1"/>
    <property type="molecule type" value="Genomic_DNA"/>
</dbReference>
<dbReference type="RefSeq" id="YP_001531210.1">
    <property type="nucleotide sequence ID" value="NC_009949.1"/>
</dbReference>
<dbReference type="SMR" id="A8W3I0"/>
<dbReference type="GeneID" id="5714827"/>
<dbReference type="GO" id="GO:0009512">
    <property type="term" value="C:cytochrome b6f complex"/>
    <property type="evidence" value="ECO:0007669"/>
    <property type="project" value="InterPro"/>
</dbReference>
<dbReference type="GO" id="GO:0042170">
    <property type="term" value="C:plastid membrane"/>
    <property type="evidence" value="ECO:0007669"/>
    <property type="project" value="UniProtKB-SubCell"/>
</dbReference>
<dbReference type="GO" id="GO:0042651">
    <property type="term" value="C:thylakoid membrane"/>
    <property type="evidence" value="ECO:0007669"/>
    <property type="project" value="UniProtKB-UniRule"/>
</dbReference>
<dbReference type="GO" id="GO:0045158">
    <property type="term" value="F:electron transporter, transferring electrons within cytochrome b6/f complex of photosystem II activity"/>
    <property type="evidence" value="ECO:0007669"/>
    <property type="project" value="InterPro"/>
</dbReference>
<dbReference type="GO" id="GO:0017004">
    <property type="term" value="P:cytochrome complex assembly"/>
    <property type="evidence" value="ECO:0007669"/>
    <property type="project" value="UniProtKB-UniRule"/>
</dbReference>
<dbReference type="GO" id="GO:0015979">
    <property type="term" value="P:photosynthesis"/>
    <property type="evidence" value="ECO:0007669"/>
    <property type="project" value="UniProtKB-KW"/>
</dbReference>
<dbReference type="HAMAP" id="MF_00395">
    <property type="entry name" value="Cytb6_f_PetN"/>
    <property type="match status" value="1"/>
</dbReference>
<dbReference type="InterPro" id="IPR036143">
    <property type="entry name" value="Cytochr_b6-f_cplx_su8_sf"/>
</dbReference>
<dbReference type="InterPro" id="IPR005497">
    <property type="entry name" value="Cytochrome_b6-f_cplx_su8"/>
</dbReference>
<dbReference type="Pfam" id="PF03742">
    <property type="entry name" value="PetN"/>
    <property type="match status" value="1"/>
</dbReference>
<dbReference type="SUPFAM" id="SSF103451">
    <property type="entry name" value="PetN subunit of the cytochrome b6f complex"/>
    <property type="match status" value="1"/>
</dbReference>
<accession>A8W3I0</accession>
<reference key="1">
    <citation type="journal article" date="2007" name="BMC Plant Biol.">
        <title>Complete plastid genome sequences suggest strong selection for retention of photosynthetic genes in the parasitic plant genus Cuscuta.</title>
        <authorList>
            <person name="McNeal J.R."/>
            <person name="Kuehl J.V."/>
            <person name="Boore J.L."/>
            <person name="dePamphilis C.W."/>
        </authorList>
    </citation>
    <scope>NUCLEOTIDE SEQUENCE [LARGE SCALE GENOMIC DNA]</scope>
</reference>
<feature type="chain" id="PRO_0000355434" description="Cytochrome b6-f complex subunit 8">
    <location>
        <begin position="1"/>
        <end position="31"/>
    </location>
</feature>
<feature type="transmembrane region" description="Helical" evidence="1">
    <location>
        <begin position="5"/>
        <end position="25"/>
    </location>
</feature>
<comment type="function">
    <text evidence="1">Component of the cytochrome b6-f complex, which mediates electron transfer between photosystem II (PSII) and photosystem I (PSI), cyclic electron flow around PSI, and state transitions.</text>
</comment>
<comment type="subunit">
    <text evidence="1">The 4 large subunits of the cytochrome b6-f complex are cytochrome b6, subunit IV (17 kDa polypeptide, PetD), cytochrome f and the Rieske protein, while the 4 small subunits are PetG, PetL, PetM and PetN. The complex functions as a dimer.</text>
</comment>
<comment type="subcellular location">
    <subcellularLocation>
        <location evidence="2">Plastid membrane</location>
        <topology evidence="1">Single-pass membrane protein</topology>
    </subcellularLocation>
</comment>
<comment type="similarity">
    <text evidence="1">Belongs to the PetN family.</text>
</comment>
<comment type="caution">
    <text evidence="2">Only inflorescences, fruits, starved seedlings and stressed stem tips are green in this organism.</text>
</comment>
<name>PETN_CUSOB</name>
<evidence type="ECO:0000255" key="1">
    <source>
        <dbReference type="HAMAP-Rule" id="MF_00395"/>
    </source>
</evidence>
<evidence type="ECO:0000305" key="2"/>
<gene>
    <name evidence="1" type="primary">petN</name>
</gene>
<protein>
    <recommendedName>
        <fullName evidence="1">Cytochrome b6-f complex subunit 8</fullName>
    </recommendedName>
    <alternativeName>
        <fullName evidence="1">Cytochrome b6-f complex subunit PetN</fullName>
    </alternativeName>
    <alternativeName>
        <fullName evidence="1">Cytochrome b6-f complex subunit VIII</fullName>
    </alternativeName>
</protein>
<organism>
    <name type="scientific">Cuscuta obtusiflora</name>
    <name type="common">Peruvian dodder</name>
    <dbReference type="NCBI Taxonomy" id="437280"/>
    <lineage>
        <taxon>Eukaryota</taxon>
        <taxon>Viridiplantae</taxon>
        <taxon>Streptophyta</taxon>
        <taxon>Embryophyta</taxon>
        <taxon>Tracheophyta</taxon>
        <taxon>Spermatophyta</taxon>
        <taxon>Magnoliopsida</taxon>
        <taxon>eudicotyledons</taxon>
        <taxon>Gunneridae</taxon>
        <taxon>Pentapetalae</taxon>
        <taxon>asterids</taxon>
        <taxon>lamiids</taxon>
        <taxon>Solanales</taxon>
        <taxon>Convolvulaceae</taxon>
        <taxon>Cuscuteae</taxon>
        <taxon>Cuscuta</taxon>
        <taxon>Cuscuta subgen. Grammica</taxon>
        <taxon>Cuscuta sect. Cleistogrammica</taxon>
    </lineage>
</organism>
<proteinExistence type="inferred from homology"/>
<sequence>MNIDIVSMAWAALMVVFTFSLSLVIWGRSGL</sequence>
<geneLocation type="plastid"/>